<feature type="chain" id="PRO_0000331604" description="Sorting nexin-31">
    <location>
        <begin position="1"/>
        <end position="439"/>
    </location>
</feature>
<feature type="domain" description="PX" evidence="2">
    <location>
        <begin position="1"/>
        <end position="109"/>
    </location>
</feature>
<feature type="region of interest" description="Disordered" evidence="3">
    <location>
        <begin position="384"/>
        <end position="409"/>
    </location>
</feature>
<feature type="splice variant" id="VSP_033263" description="In isoform 2." evidence="4">
    <location>
        <position position="410"/>
    </location>
</feature>
<feature type="sequence conflict" description="In Ref. 1; BAB29419." evidence="5" ref="1">
    <original>A</original>
    <variation>S</variation>
    <location>
        <position position="288"/>
    </location>
</feature>
<dbReference type="EMBL" id="AK014536">
    <property type="protein sequence ID" value="BAB29419.2"/>
    <property type="molecule type" value="mRNA"/>
</dbReference>
<dbReference type="EMBL" id="AK034196">
    <property type="protein sequence ID" value="BAC28627.1"/>
    <property type="molecule type" value="mRNA"/>
</dbReference>
<dbReference type="EMBL" id="AK035226">
    <property type="protein sequence ID" value="BAC28987.1"/>
    <property type="molecule type" value="mRNA"/>
</dbReference>
<dbReference type="EMBL" id="BC061007">
    <property type="protein sequence ID" value="AAH61007.1"/>
    <property type="molecule type" value="mRNA"/>
</dbReference>
<dbReference type="CCDS" id="CCDS27430.1">
    <molecule id="Q6P8Y7-2"/>
</dbReference>
<dbReference type="CCDS" id="CCDS84166.1">
    <molecule id="Q6P8Y7-1"/>
</dbReference>
<dbReference type="RefSeq" id="NP_001333951.1">
    <molecule id="Q6P8Y7-1"/>
    <property type="nucleotide sequence ID" value="NM_001347022.2"/>
</dbReference>
<dbReference type="RefSeq" id="NP_079988.3">
    <molecule id="Q6P8Y7-2"/>
    <property type="nucleotide sequence ID" value="NM_025712.4"/>
</dbReference>
<dbReference type="SMR" id="Q6P8Y7"/>
<dbReference type="DIP" id="DIP-60339N"/>
<dbReference type="FunCoup" id="Q6P8Y7">
    <property type="interactions" value="7"/>
</dbReference>
<dbReference type="IntAct" id="Q6P8Y7">
    <property type="interactions" value="3"/>
</dbReference>
<dbReference type="STRING" id="10090.ENSMUSP00000124063"/>
<dbReference type="PhosphoSitePlus" id="Q6P8Y7"/>
<dbReference type="PaxDb" id="10090-ENSMUSP00000013755"/>
<dbReference type="ProteomicsDB" id="261598">
    <molecule id="Q6P8Y7-1"/>
</dbReference>
<dbReference type="ProteomicsDB" id="261599">
    <molecule id="Q6P8Y7-2"/>
</dbReference>
<dbReference type="Antibodypedia" id="13167">
    <property type="antibodies" value="63 antibodies from 14 providers"/>
</dbReference>
<dbReference type="DNASU" id="66696"/>
<dbReference type="Ensembl" id="ENSMUST00000013755.12">
    <molecule id="Q6P8Y7-2"/>
    <property type="protein sequence ID" value="ENSMUSP00000013755.6"/>
    <property type="gene ID" value="ENSMUSG00000013611.15"/>
</dbReference>
<dbReference type="Ensembl" id="ENSMUST00000161202.8">
    <molecule id="Q6P8Y7-1"/>
    <property type="protein sequence ID" value="ENSMUSP00000124063.2"/>
    <property type="gene ID" value="ENSMUSG00000013611.15"/>
</dbReference>
<dbReference type="GeneID" id="66696"/>
<dbReference type="KEGG" id="mmu:66696"/>
<dbReference type="UCSC" id="uc007vmv.1">
    <molecule id="Q6P8Y7-2"/>
    <property type="organism name" value="mouse"/>
</dbReference>
<dbReference type="UCSC" id="uc007vmw.1">
    <molecule id="Q6P8Y7-1"/>
    <property type="organism name" value="mouse"/>
</dbReference>
<dbReference type="AGR" id="MGI:1913946"/>
<dbReference type="CTD" id="169166"/>
<dbReference type="MGI" id="MGI:1913946">
    <property type="gene designation" value="Snx31"/>
</dbReference>
<dbReference type="VEuPathDB" id="HostDB:ENSMUSG00000013611"/>
<dbReference type="eggNOG" id="KOG3784">
    <property type="taxonomic scope" value="Eukaryota"/>
</dbReference>
<dbReference type="GeneTree" id="ENSGT00950000183212"/>
<dbReference type="HOGENOM" id="CLU_041342_0_0_1"/>
<dbReference type="InParanoid" id="Q6P8Y7"/>
<dbReference type="OMA" id="ESRWQWF"/>
<dbReference type="OrthoDB" id="5772781at2759"/>
<dbReference type="PhylomeDB" id="Q6P8Y7"/>
<dbReference type="TreeFam" id="TF318398"/>
<dbReference type="BioGRID-ORCS" id="66696">
    <property type="hits" value="3 hits in 78 CRISPR screens"/>
</dbReference>
<dbReference type="ChiTaRS" id="Snx31">
    <property type="organism name" value="mouse"/>
</dbReference>
<dbReference type="PRO" id="PR:Q6P8Y7"/>
<dbReference type="Proteomes" id="UP000000589">
    <property type="component" value="Chromosome 15"/>
</dbReference>
<dbReference type="RNAct" id="Q6P8Y7">
    <property type="molecule type" value="protein"/>
</dbReference>
<dbReference type="Bgee" id="ENSMUSG00000013611">
    <property type="expression patterns" value="Expressed in urinary bladder urothelium and 50 other cell types or tissues"/>
</dbReference>
<dbReference type="GO" id="GO:0032991">
    <property type="term" value="C:protein-containing complex"/>
    <property type="evidence" value="ECO:0000314"/>
    <property type="project" value="MGI"/>
</dbReference>
<dbReference type="GO" id="GO:0035091">
    <property type="term" value="F:phosphatidylinositol binding"/>
    <property type="evidence" value="ECO:0007669"/>
    <property type="project" value="InterPro"/>
</dbReference>
<dbReference type="GO" id="GO:0015031">
    <property type="term" value="P:protein transport"/>
    <property type="evidence" value="ECO:0007669"/>
    <property type="project" value="UniProtKB-KW"/>
</dbReference>
<dbReference type="CDD" id="cd06885">
    <property type="entry name" value="PX_SNX17_31"/>
    <property type="match status" value="1"/>
</dbReference>
<dbReference type="FunFam" id="2.30.29.30:FF:000297">
    <property type="entry name" value="Sorting nexin 31"/>
    <property type="match status" value="1"/>
</dbReference>
<dbReference type="FunFam" id="3.10.20.90:FF:000230">
    <property type="entry name" value="Sorting nexin 31"/>
    <property type="match status" value="1"/>
</dbReference>
<dbReference type="FunFam" id="1.20.80.60:FF:000001">
    <property type="entry name" value="Sorting nexin-17 isoform1"/>
    <property type="match status" value="1"/>
</dbReference>
<dbReference type="FunFam" id="3.30.1520.10:FF:000008">
    <property type="entry name" value="Sorting nexin-17 isoform1"/>
    <property type="match status" value="1"/>
</dbReference>
<dbReference type="Gene3D" id="1.20.80.60">
    <property type="match status" value="1"/>
</dbReference>
<dbReference type="Gene3D" id="3.10.20.90">
    <property type="entry name" value="Phosphatidylinositol 3-kinase Catalytic Subunit, Chain A, domain 1"/>
    <property type="match status" value="1"/>
</dbReference>
<dbReference type="Gene3D" id="3.30.1520.10">
    <property type="entry name" value="Phox-like domain"/>
    <property type="match status" value="1"/>
</dbReference>
<dbReference type="Gene3D" id="2.30.29.30">
    <property type="entry name" value="Pleckstrin-homology domain (PH domain)/Phosphotyrosine-binding domain (PTB)"/>
    <property type="match status" value="1"/>
</dbReference>
<dbReference type="InterPro" id="IPR011993">
    <property type="entry name" value="PH-like_dom_sf"/>
</dbReference>
<dbReference type="InterPro" id="IPR001683">
    <property type="entry name" value="PX_dom"/>
</dbReference>
<dbReference type="InterPro" id="IPR036871">
    <property type="entry name" value="PX_dom_sf"/>
</dbReference>
<dbReference type="InterPro" id="IPR048763">
    <property type="entry name" value="SNX17-31_FERM_F1"/>
</dbReference>
<dbReference type="InterPro" id="IPR048767">
    <property type="entry name" value="SNX17-31_FERM_F2"/>
</dbReference>
<dbReference type="InterPro" id="IPR040842">
    <property type="entry name" value="SNX17/31_FERM"/>
</dbReference>
<dbReference type="PANTHER" id="PTHR12431">
    <property type="entry name" value="SORTING NEXIN 17 AND 27"/>
    <property type="match status" value="1"/>
</dbReference>
<dbReference type="PANTHER" id="PTHR12431:SF15">
    <property type="entry name" value="SORTING NEXIN-31"/>
    <property type="match status" value="1"/>
</dbReference>
<dbReference type="Pfam" id="PF00787">
    <property type="entry name" value="PX"/>
    <property type="match status" value="1"/>
</dbReference>
<dbReference type="Pfam" id="PF21273">
    <property type="entry name" value="SNX17-27-31_F1_FERM"/>
    <property type="match status" value="1"/>
</dbReference>
<dbReference type="Pfam" id="PF21271">
    <property type="entry name" value="SNX17-31_F2_FERM"/>
    <property type="match status" value="1"/>
</dbReference>
<dbReference type="Pfam" id="PF18116">
    <property type="entry name" value="SNX17_FERM_C"/>
    <property type="match status" value="1"/>
</dbReference>
<dbReference type="SMART" id="SM00312">
    <property type="entry name" value="PX"/>
    <property type="match status" value="1"/>
</dbReference>
<dbReference type="SUPFAM" id="SSF64268">
    <property type="entry name" value="PX domain"/>
    <property type="match status" value="1"/>
</dbReference>
<dbReference type="PROSITE" id="PS50195">
    <property type="entry name" value="PX"/>
    <property type="match status" value="1"/>
</dbReference>
<evidence type="ECO:0000250" key="1">
    <source>
        <dbReference type="UniProtKB" id="Q8N9S9"/>
    </source>
</evidence>
<evidence type="ECO:0000255" key="2">
    <source>
        <dbReference type="PROSITE-ProRule" id="PRU00147"/>
    </source>
</evidence>
<evidence type="ECO:0000256" key="3">
    <source>
        <dbReference type="SAM" id="MobiDB-lite"/>
    </source>
</evidence>
<evidence type="ECO:0000303" key="4">
    <source>
    </source>
</evidence>
<evidence type="ECO:0000305" key="5"/>
<organism>
    <name type="scientific">Mus musculus</name>
    <name type="common">Mouse</name>
    <dbReference type="NCBI Taxonomy" id="10090"/>
    <lineage>
        <taxon>Eukaryota</taxon>
        <taxon>Metazoa</taxon>
        <taxon>Chordata</taxon>
        <taxon>Craniata</taxon>
        <taxon>Vertebrata</taxon>
        <taxon>Euteleostomi</taxon>
        <taxon>Mammalia</taxon>
        <taxon>Eutheria</taxon>
        <taxon>Euarchontoglires</taxon>
        <taxon>Glires</taxon>
        <taxon>Rodentia</taxon>
        <taxon>Myomorpha</taxon>
        <taxon>Muroidea</taxon>
        <taxon>Muridae</taxon>
        <taxon>Murinae</taxon>
        <taxon>Mus</taxon>
        <taxon>Mus</taxon>
    </lineage>
</organism>
<keyword id="KW-0025">Alternative splicing</keyword>
<keyword id="KW-0653">Protein transport</keyword>
<keyword id="KW-1185">Reference proteome</keyword>
<keyword id="KW-0813">Transport</keyword>
<proteinExistence type="evidence at transcript level"/>
<reference key="1">
    <citation type="journal article" date="2005" name="Science">
        <title>The transcriptional landscape of the mammalian genome.</title>
        <authorList>
            <person name="Carninci P."/>
            <person name="Kasukawa T."/>
            <person name="Katayama S."/>
            <person name="Gough J."/>
            <person name="Frith M.C."/>
            <person name="Maeda N."/>
            <person name="Oyama R."/>
            <person name="Ravasi T."/>
            <person name="Lenhard B."/>
            <person name="Wells C."/>
            <person name="Kodzius R."/>
            <person name="Shimokawa K."/>
            <person name="Bajic V.B."/>
            <person name="Brenner S.E."/>
            <person name="Batalov S."/>
            <person name="Forrest A.R."/>
            <person name="Zavolan M."/>
            <person name="Davis M.J."/>
            <person name="Wilming L.G."/>
            <person name="Aidinis V."/>
            <person name="Allen J.E."/>
            <person name="Ambesi-Impiombato A."/>
            <person name="Apweiler R."/>
            <person name="Aturaliya R.N."/>
            <person name="Bailey T.L."/>
            <person name="Bansal M."/>
            <person name="Baxter L."/>
            <person name="Beisel K.W."/>
            <person name="Bersano T."/>
            <person name="Bono H."/>
            <person name="Chalk A.M."/>
            <person name="Chiu K.P."/>
            <person name="Choudhary V."/>
            <person name="Christoffels A."/>
            <person name="Clutterbuck D.R."/>
            <person name="Crowe M.L."/>
            <person name="Dalla E."/>
            <person name="Dalrymple B.P."/>
            <person name="de Bono B."/>
            <person name="Della Gatta G."/>
            <person name="di Bernardo D."/>
            <person name="Down T."/>
            <person name="Engstrom P."/>
            <person name="Fagiolini M."/>
            <person name="Faulkner G."/>
            <person name="Fletcher C.F."/>
            <person name="Fukushima T."/>
            <person name="Furuno M."/>
            <person name="Futaki S."/>
            <person name="Gariboldi M."/>
            <person name="Georgii-Hemming P."/>
            <person name="Gingeras T.R."/>
            <person name="Gojobori T."/>
            <person name="Green R.E."/>
            <person name="Gustincich S."/>
            <person name="Harbers M."/>
            <person name="Hayashi Y."/>
            <person name="Hensch T.K."/>
            <person name="Hirokawa N."/>
            <person name="Hill D."/>
            <person name="Huminiecki L."/>
            <person name="Iacono M."/>
            <person name="Ikeo K."/>
            <person name="Iwama A."/>
            <person name="Ishikawa T."/>
            <person name="Jakt M."/>
            <person name="Kanapin A."/>
            <person name="Katoh M."/>
            <person name="Kawasawa Y."/>
            <person name="Kelso J."/>
            <person name="Kitamura H."/>
            <person name="Kitano H."/>
            <person name="Kollias G."/>
            <person name="Krishnan S.P."/>
            <person name="Kruger A."/>
            <person name="Kummerfeld S.K."/>
            <person name="Kurochkin I.V."/>
            <person name="Lareau L.F."/>
            <person name="Lazarevic D."/>
            <person name="Lipovich L."/>
            <person name="Liu J."/>
            <person name="Liuni S."/>
            <person name="McWilliam S."/>
            <person name="Madan Babu M."/>
            <person name="Madera M."/>
            <person name="Marchionni L."/>
            <person name="Matsuda H."/>
            <person name="Matsuzawa S."/>
            <person name="Miki H."/>
            <person name="Mignone F."/>
            <person name="Miyake S."/>
            <person name="Morris K."/>
            <person name="Mottagui-Tabar S."/>
            <person name="Mulder N."/>
            <person name="Nakano N."/>
            <person name="Nakauchi H."/>
            <person name="Ng P."/>
            <person name="Nilsson R."/>
            <person name="Nishiguchi S."/>
            <person name="Nishikawa S."/>
            <person name="Nori F."/>
            <person name="Ohara O."/>
            <person name="Okazaki Y."/>
            <person name="Orlando V."/>
            <person name="Pang K.C."/>
            <person name="Pavan W.J."/>
            <person name="Pavesi G."/>
            <person name="Pesole G."/>
            <person name="Petrovsky N."/>
            <person name="Piazza S."/>
            <person name="Reed J."/>
            <person name="Reid J.F."/>
            <person name="Ring B.Z."/>
            <person name="Ringwald M."/>
            <person name="Rost B."/>
            <person name="Ruan Y."/>
            <person name="Salzberg S.L."/>
            <person name="Sandelin A."/>
            <person name="Schneider C."/>
            <person name="Schoenbach C."/>
            <person name="Sekiguchi K."/>
            <person name="Semple C.A."/>
            <person name="Seno S."/>
            <person name="Sessa L."/>
            <person name="Sheng Y."/>
            <person name="Shibata Y."/>
            <person name="Shimada H."/>
            <person name="Shimada K."/>
            <person name="Silva D."/>
            <person name="Sinclair B."/>
            <person name="Sperling S."/>
            <person name="Stupka E."/>
            <person name="Sugiura K."/>
            <person name="Sultana R."/>
            <person name="Takenaka Y."/>
            <person name="Taki K."/>
            <person name="Tammoja K."/>
            <person name="Tan S.L."/>
            <person name="Tang S."/>
            <person name="Taylor M.S."/>
            <person name="Tegner J."/>
            <person name="Teichmann S.A."/>
            <person name="Ueda H.R."/>
            <person name="van Nimwegen E."/>
            <person name="Verardo R."/>
            <person name="Wei C.L."/>
            <person name="Yagi K."/>
            <person name="Yamanishi H."/>
            <person name="Zabarovsky E."/>
            <person name="Zhu S."/>
            <person name="Zimmer A."/>
            <person name="Hide W."/>
            <person name="Bult C."/>
            <person name="Grimmond S.M."/>
            <person name="Teasdale R.D."/>
            <person name="Liu E.T."/>
            <person name="Brusic V."/>
            <person name="Quackenbush J."/>
            <person name="Wahlestedt C."/>
            <person name="Mattick J.S."/>
            <person name="Hume D.A."/>
            <person name="Kai C."/>
            <person name="Sasaki D."/>
            <person name="Tomaru Y."/>
            <person name="Fukuda S."/>
            <person name="Kanamori-Katayama M."/>
            <person name="Suzuki M."/>
            <person name="Aoki J."/>
            <person name="Arakawa T."/>
            <person name="Iida J."/>
            <person name="Imamura K."/>
            <person name="Itoh M."/>
            <person name="Kato T."/>
            <person name="Kawaji H."/>
            <person name="Kawagashira N."/>
            <person name="Kawashima T."/>
            <person name="Kojima M."/>
            <person name="Kondo S."/>
            <person name="Konno H."/>
            <person name="Nakano K."/>
            <person name="Ninomiya N."/>
            <person name="Nishio T."/>
            <person name="Okada M."/>
            <person name="Plessy C."/>
            <person name="Shibata K."/>
            <person name="Shiraki T."/>
            <person name="Suzuki S."/>
            <person name="Tagami M."/>
            <person name="Waki K."/>
            <person name="Watahiki A."/>
            <person name="Okamura-Oho Y."/>
            <person name="Suzuki H."/>
            <person name="Kawai J."/>
            <person name="Hayashizaki Y."/>
        </authorList>
    </citation>
    <scope>NUCLEOTIDE SEQUENCE [LARGE SCALE MRNA] (ISOFORM 2)</scope>
    <source>
        <strain>C57BL/6J</strain>
        <tissue>Diencephalon</tissue>
        <tissue>Skin</tissue>
        <tissue>Urinary bladder</tissue>
    </source>
</reference>
<reference key="2">
    <citation type="journal article" date="2004" name="Genome Res.">
        <title>The status, quality, and expansion of the NIH full-length cDNA project: the Mammalian Gene Collection (MGC).</title>
        <authorList>
            <consortium name="The MGC Project Team"/>
        </authorList>
    </citation>
    <scope>NUCLEOTIDE SEQUENCE [LARGE SCALE MRNA] (ISOFORM 1)</scope>
    <source>
        <tissue>Kidney</tissue>
    </source>
</reference>
<name>SNX31_MOUSE</name>
<comment type="function">
    <text evidence="1">May be involved in protein trafficking.</text>
</comment>
<comment type="subunit">
    <text evidence="1">Interacts with CCDC22, CCDC93, VPS26C and VPS35L, associates with the retriever and CCC complexes.</text>
</comment>
<comment type="alternative products">
    <event type="alternative splicing"/>
    <isoform>
        <id>Q6P8Y7-1</id>
        <name>1</name>
        <sequence type="displayed"/>
    </isoform>
    <isoform>
        <id>Q6P8Y7-2</id>
        <name>2</name>
        <sequence type="described" ref="VSP_033263"/>
    </isoform>
</comment>
<comment type="similarity">
    <text evidence="5">Belongs to the sorting nexin family.</text>
</comment>
<sequence>MKMHFCIPVSQQRPDALGGRYVLYSVYLDGFLFCKVRYSQLHRWDEQLRRVFGNCLPPFPPKYYLAMTTAMAEERRDQLERYLQNVTADPRVTRSDVFTEFLTLVQLHTLNITIQNVELAVFLPDGRSIKVEGLTSDTAERVLEVMAHKLGLQPDLVGYFGLFLIQCFPEGKLSVVKKLADFELPYTSLQSSEMENCKIGLRKWYLDPALDSMLMDCRAAGDLLYMQAVQDIEKEWMKPTQAQREELKALQKKENQTKFLELSQEVRHYGYVQLDPCTCNHPEPGCGAQLSIGNNEISCCITLPNGQIQDIAFQMSRVKCWQVTFLGTLLDTDGPQRTLNQNLELRFQYSEDSCQQWFVIYTKQAFFLSSCLKKMISERMTKLTEQSPEMQIEVPEQGRSKKHPSQPSQQKVYFNFLRKGKMKRSEGDYVWDTLMEEGL</sequence>
<protein>
    <recommendedName>
        <fullName>Sorting nexin-31</fullName>
    </recommendedName>
</protein>
<gene>
    <name type="primary">Snx31</name>
</gene>
<accession>Q6P8Y7</accession>
<accession>Q8BH14</accession>
<accession>Q9D690</accession>